<sequence>MSKRTFQPNNRRRAKKHGFRLRMRTRAGRAILAARRGKGRTELSA</sequence>
<organism>
    <name type="scientific">Arthrobacter sp. (strain FB24)</name>
    <dbReference type="NCBI Taxonomy" id="290399"/>
    <lineage>
        <taxon>Bacteria</taxon>
        <taxon>Bacillati</taxon>
        <taxon>Actinomycetota</taxon>
        <taxon>Actinomycetes</taxon>
        <taxon>Micrococcales</taxon>
        <taxon>Micrococcaceae</taxon>
        <taxon>Arthrobacter</taxon>
    </lineage>
</organism>
<dbReference type="EMBL" id="CP000454">
    <property type="protein sequence ID" value="ABK05547.1"/>
    <property type="molecule type" value="Genomic_DNA"/>
</dbReference>
<dbReference type="RefSeq" id="WP_003800212.1">
    <property type="nucleotide sequence ID" value="NC_008541.1"/>
</dbReference>
<dbReference type="SMR" id="A0K2M7"/>
<dbReference type="STRING" id="290399.Arth_4172"/>
<dbReference type="GeneID" id="97423714"/>
<dbReference type="KEGG" id="art:Arth_4172"/>
<dbReference type="eggNOG" id="COG0230">
    <property type="taxonomic scope" value="Bacteria"/>
</dbReference>
<dbReference type="HOGENOM" id="CLU_129938_2_1_11"/>
<dbReference type="Proteomes" id="UP000000754">
    <property type="component" value="Chromosome"/>
</dbReference>
<dbReference type="GO" id="GO:1990904">
    <property type="term" value="C:ribonucleoprotein complex"/>
    <property type="evidence" value="ECO:0007669"/>
    <property type="project" value="UniProtKB-KW"/>
</dbReference>
<dbReference type="GO" id="GO:0005840">
    <property type="term" value="C:ribosome"/>
    <property type="evidence" value="ECO:0007669"/>
    <property type="project" value="UniProtKB-KW"/>
</dbReference>
<dbReference type="GO" id="GO:0003735">
    <property type="term" value="F:structural constituent of ribosome"/>
    <property type="evidence" value="ECO:0007669"/>
    <property type="project" value="InterPro"/>
</dbReference>
<dbReference type="GO" id="GO:0006412">
    <property type="term" value="P:translation"/>
    <property type="evidence" value="ECO:0007669"/>
    <property type="project" value="UniProtKB-UniRule"/>
</dbReference>
<dbReference type="FunFam" id="1.10.287.3980:FF:000001">
    <property type="entry name" value="Mitochondrial ribosomal protein L34"/>
    <property type="match status" value="1"/>
</dbReference>
<dbReference type="Gene3D" id="1.10.287.3980">
    <property type="match status" value="1"/>
</dbReference>
<dbReference type="HAMAP" id="MF_00391">
    <property type="entry name" value="Ribosomal_bL34"/>
    <property type="match status" value="1"/>
</dbReference>
<dbReference type="InterPro" id="IPR000271">
    <property type="entry name" value="Ribosomal_bL34"/>
</dbReference>
<dbReference type="InterPro" id="IPR020939">
    <property type="entry name" value="Ribosomal_bL34_CS"/>
</dbReference>
<dbReference type="NCBIfam" id="TIGR01030">
    <property type="entry name" value="rpmH_bact"/>
    <property type="match status" value="1"/>
</dbReference>
<dbReference type="PANTHER" id="PTHR14503:SF4">
    <property type="entry name" value="LARGE RIBOSOMAL SUBUNIT PROTEIN BL34M"/>
    <property type="match status" value="1"/>
</dbReference>
<dbReference type="PANTHER" id="PTHR14503">
    <property type="entry name" value="MITOCHONDRIAL RIBOSOMAL PROTEIN 34 FAMILY MEMBER"/>
    <property type="match status" value="1"/>
</dbReference>
<dbReference type="Pfam" id="PF00468">
    <property type="entry name" value="Ribosomal_L34"/>
    <property type="match status" value="1"/>
</dbReference>
<dbReference type="PROSITE" id="PS00784">
    <property type="entry name" value="RIBOSOMAL_L34"/>
    <property type="match status" value="1"/>
</dbReference>
<name>RL34_ARTS2</name>
<evidence type="ECO:0000255" key="1">
    <source>
        <dbReference type="HAMAP-Rule" id="MF_00391"/>
    </source>
</evidence>
<evidence type="ECO:0000305" key="2"/>
<gene>
    <name evidence="1" type="primary">rpmH</name>
    <name type="ordered locus">Arth_4172</name>
</gene>
<protein>
    <recommendedName>
        <fullName evidence="1">Large ribosomal subunit protein bL34</fullName>
    </recommendedName>
    <alternativeName>
        <fullName evidence="2">50S ribosomal protein L34</fullName>
    </alternativeName>
</protein>
<reference key="1">
    <citation type="journal article" date="2013" name="Stand. Genomic Sci.">
        <title>Complete genome sequence of Arthrobacter sp. strain FB24.</title>
        <authorList>
            <person name="Nakatsu C.H."/>
            <person name="Barabote R."/>
            <person name="Thompson S."/>
            <person name="Bruce D."/>
            <person name="Detter C."/>
            <person name="Brettin T."/>
            <person name="Han C."/>
            <person name="Beasley F."/>
            <person name="Chen W."/>
            <person name="Konopka A."/>
            <person name="Xie G."/>
        </authorList>
    </citation>
    <scope>NUCLEOTIDE SEQUENCE [LARGE SCALE GENOMIC DNA]</scope>
    <source>
        <strain>FB24</strain>
    </source>
</reference>
<feature type="chain" id="PRO_1000013274" description="Large ribosomal subunit protein bL34">
    <location>
        <begin position="1"/>
        <end position="45"/>
    </location>
</feature>
<proteinExistence type="inferred from homology"/>
<keyword id="KW-1185">Reference proteome</keyword>
<keyword id="KW-0687">Ribonucleoprotein</keyword>
<keyword id="KW-0689">Ribosomal protein</keyword>
<accession>A0K2M7</accession>
<comment type="similarity">
    <text evidence="1">Belongs to the bacterial ribosomal protein bL34 family.</text>
</comment>